<feature type="chain" id="PRO_1000011082" description="N-acetyl-gamma-glutamyl-phosphate reductase">
    <location>
        <begin position="1"/>
        <end position="316"/>
    </location>
</feature>
<feature type="active site" evidence="1">
    <location>
        <position position="136"/>
    </location>
</feature>
<proteinExistence type="inferred from homology"/>
<name>ARGC_XANC8</name>
<comment type="function">
    <text evidence="1">Catalyzes the NADPH-dependent reduction of N-acetyl-5-glutamyl phosphate to yield N-acetyl-L-glutamate 5-semialdehyde.</text>
</comment>
<comment type="catalytic activity">
    <reaction evidence="1">
        <text>N-acetyl-L-glutamate 5-semialdehyde + phosphate + NADP(+) = N-acetyl-L-glutamyl 5-phosphate + NADPH + H(+)</text>
        <dbReference type="Rhea" id="RHEA:21588"/>
        <dbReference type="ChEBI" id="CHEBI:15378"/>
        <dbReference type="ChEBI" id="CHEBI:29123"/>
        <dbReference type="ChEBI" id="CHEBI:43474"/>
        <dbReference type="ChEBI" id="CHEBI:57783"/>
        <dbReference type="ChEBI" id="CHEBI:57936"/>
        <dbReference type="ChEBI" id="CHEBI:58349"/>
        <dbReference type="EC" id="1.2.1.38"/>
    </reaction>
</comment>
<comment type="pathway">
    <text evidence="1">Amino-acid biosynthesis; L-arginine biosynthesis; N(2)-acetyl-L-ornithine from L-glutamate: step 3/4.</text>
</comment>
<comment type="subcellular location">
    <subcellularLocation>
        <location evidence="1">Cytoplasm</location>
    </subcellularLocation>
</comment>
<comment type="similarity">
    <text evidence="1">Belongs to the NAGSA dehydrogenase family. Type 1 subfamily.</text>
</comment>
<reference key="1">
    <citation type="journal article" date="2005" name="Genome Res.">
        <title>Comparative and functional genomic analyses of the pathogenicity of phytopathogen Xanthomonas campestris pv. campestris.</title>
        <authorList>
            <person name="Qian W."/>
            <person name="Jia Y."/>
            <person name="Ren S.-X."/>
            <person name="He Y.-Q."/>
            <person name="Feng J.-X."/>
            <person name="Lu L.-F."/>
            <person name="Sun Q."/>
            <person name="Ying G."/>
            <person name="Tang D.-J."/>
            <person name="Tang H."/>
            <person name="Wu W."/>
            <person name="Hao P."/>
            <person name="Wang L."/>
            <person name="Jiang B.-L."/>
            <person name="Zeng S."/>
            <person name="Gu W.-Y."/>
            <person name="Lu G."/>
            <person name="Rong L."/>
            <person name="Tian Y."/>
            <person name="Yao Z."/>
            <person name="Fu G."/>
            <person name="Chen B."/>
            <person name="Fang R."/>
            <person name="Qiang B."/>
            <person name="Chen Z."/>
            <person name="Zhao G.-P."/>
            <person name="Tang J.-L."/>
            <person name="He C."/>
        </authorList>
    </citation>
    <scope>NUCLEOTIDE SEQUENCE [LARGE SCALE GENOMIC DNA]</scope>
    <source>
        <strain>8004</strain>
    </source>
</reference>
<accession>Q4UVI5</accession>
<keyword id="KW-0028">Amino-acid biosynthesis</keyword>
<keyword id="KW-0055">Arginine biosynthesis</keyword>
<keyword id="KW-0963">Cytoplasm</keyword>
<keyword id="KW-0521">NADP</keyword>
<keyword id="KW-0560">Oxidoreductase</keyword>
<dbReference type="EC" id="1.2.1.38" evidence="1"/>
<dbReference type="EMBL" id="CP000050">
    <property type="protein sequence ID" value="AAY48938.1"/>
    <property type="molecule type" value="Genomic_DNA"/>
</dbReference>
<dbReference type="RefSeq" id="WP_011269667.1">
    <property type="nucleotide sequence ID" value="NC_007086.1"/>
</dbReference>
<dbReference type="SMR" id="Q4UVI5"/>
<dbReference type="KEGG" id="xcb:XC_1875"/>
<dbReference type="HOGENOM" id="CLU_006384_3_0_6"/>
<dbReference type="UniPathway" id="UPA00068">
    <property type="reaction ID" value="UER00108"/>
</dbReference>
<dbReference type="Proteomes" id="UP000000420">
    <property type="component" value="Chromosome"/>
</dbReference>
<dbReference type="GO" id="GO:0005737">
    <property type="term" value="C:cytoplasm"/>
    <property type="evidence" value="ECO:0007669"/>
    <property type="project" value="UniProtKB-SubCell"/>
</dbReference>
<dbReference type="GO" id="GO:0003942">
    <property type="term" value="F:N-acetyl-gamma-glutamyl-phosphate reductase activity"/>
    <property type="evidence" value="ECO:0007669"/>
    <property type="project" value="UniProtKB-UniRule"/>
</dbReference>
<dbReference type="GO" id="GO:0051287">
    <property type="term" value="F:NAD binding"/>
    <property type="evidence" value="ECO:0007669"/>
    <property type="project" value="InterPro"/>
</dbReference>
<dbReference type="GO" id="GO:0070401">
    <property type="term" value="F:NADP+ binding"/>
    <property type="evidence" value="ECO:0007669"/>
    <property type="project" value="InterPro"/>
</dbReference>
<dbReference type="GO" id="GO:0006526">
    <property type="term" value="P:L-arginine biosynthetic process"/>
    <property type="evidence" value="ECO:0007669"/>
    <property type="project" value="UniProtKB-UniRule"/>
</dbReference>
<dbReference type="CDD" id="cd23936">
    <property type="entry name" value="AGPR_C_ARG5_6_like"/>
    <property type="match status" value="1"/>
</dbReference>
<dbReference type="CDD" id="cd24149">
    <property type="entry name" value="AGPR_N_ARG5_6_like"/>
    <property type="match status" value="1"/>
</dbReference>
<dbReference type="Gene3D" id="3.30.360.10">
    <property type="entry name" value="Dihydrodipicolinate Reductase, domain 2"/>
    <property type="match status" value="1"/>
</dbReference>
<dbReference type="Gene3D" id="3.40.50.720">
    <property type="entry name" value="NAD(P)-binding Rossmann-like Domain"/>
    <property type="match status" value="1"/>
</dbReference>
<dbReference type="HAMAP" id="MF_00150">
    <property type="entry name" value="ArgC_type1"/>
    <property type="match status" value="1"/>
</dbReference>
<dbReference type="InterPro" id="IPR023013">
    <property type="entry name" value="AGPR_AS"/>
</dbReference>
<dbReference type="InterPro" id="IPR000706">
    <property type="entry name" value="AGPR_type-1"/>
</dbReference>
<dbReference type="InterPro" id="IPR036291">
    <property type="entry name" value="NAD(P)-bd_dom_sf"/>
</dbReference>
<dbReference type="InterPro" id="IPR050085">
    <property type="entry name" value="NAGSA_dehydrogenase"/>
</dbReference>
<dbReference type="InterPro" id="IPR000534">
    <property type="entry name" value="Semialdehyde_DH_NAD-bd"/>
</dbReference>
<dbReference type="NCBIfam" id="TIGR01850">
    <property type="entry name" value="argC"/>
    <property type="match status" value="1"/>
</dbReference>
<dbReference type="PANTHER" id="PTHR32338:SF10">
    <property type="entry name" value="N-ACETYL-GAMMA-GLUTAMYL-PHOSPHATE REDUCTASE, CHLOROPLASTIC-RELATED"/>
    <property type="match status" value="1"/>
</dbReference>
<dbReference type="PANTHER" id="PTHR32338">
    <property type="entry name" value="N-ACETYL-GAMMA-GLUTAMYL-PHOSPHATE REDUCTASE, CHLOROPLASTIC-RELATED-RELATED"/>
    <property type="match status" value="1"/>
</dbReference>
<dbReference type="Pfam" id="PF01118">
    <property type="entry name" value="Semialdhyde_dh"/>
    <property type="match status" value="1"/>
</dbReference>
<dbReference type="Pfam" id="PF22698">
    <property type="entry name" value="Semialdhyde_dhC_1"/>
    <property type="match status" value="1"/>
</dbReference>
<dbReference type="SMART" id="SM00859">
    <property type="entry name" value="Semialdhyde_dh"/>
    <property type="match status" value="1"/>
</dbReference>
<dbReference type="SUPFAM" id="SSF55347">
    <property type="entry name" value="Glyceraldehyde-3-phosphate dehydrogenase-like, C-terminal domain"/>
    <property type="match status" value="1"/>
</dbReference>
<dbReference type="SUPFAM" id="SSF51735">
    <property type="entry name" value="NAD(P)-binding Rossmann-fold domains"/>
    <property type="match status" value="1"/>
</dbReference>
<dbReference type="PROSITE" id="PS01224">
    <property type="entry name" value="ARGC"/>
    <property type="match status" value="1"/>
</dbReference>
<gene>
    <name evidence="1" type="primary">argC</name>
    <name type="ordered locus">XC_1875</name>
</gene>
<organism>
    <name type="scientific">Xanthomonas campestris pv. campestris (strain 8004)</name>
    <dbReference type="NCBI Taxonomy" id="314565"/>
    <lineage>
        <taxon>Bacteria</taxon>
        <taxon>Pseudomonadati</taxon>
        <taxon>Pseudomonadota</taxon>
        <taxon>Gammaproteobacteria</taxon>
        <taxon>Lysobacterales</taxon>
        <taxon>Lysobacteraceae</taxon>
        <taxon>Xanthomonas</taxon>
    </lineage>
</organism>
<sequence>MTVQPTTIGIVGARGHTGAELIKLIAAHPQLQLVFVSSRELAGQRVAEHSDGYEGELRYESLDADAVAAKAADVVILALPNGKAEPFVAAIDANRPQTLLIDLSADYRFDPAWYYGLPELTRHTYAGQRRISNPGCYATAMQLAITPLREQLAGPPQCFGVSGYSGAGTTPSDKNNPALLADNLMPYALTNHMHEREVSAQLGVPVEFMPHVAPHFRGITMTVNLWLQQPLTREQIHARYLERYAHEPLIEIVDEAPWVSRIAGTQGVQIGGFTMAPGNKRVVVVATLDNLLKGAATQAMQNLNLALGWDELTAIG</sequence>
<evidence type="ECO:0000255" key="1">
    <source>
        <dbReference type="HAMAP-Rule" id="MF_00150"/>
    </source>
</evidence>
<protein>
    <recommendedName>
        <fullName evidence="1">N-acetyl-gamma-glutamyl-phosphate reductase</fullName>
        <shortName evidence="1">AGPR</shortName>
        <ecNumber evidence="1">1.2.1.38</ecNumber>
    </recommendedName>
    <alternativeName>
        <fullName evidence="1">N-acetyl-glutamate semialdehyde dehydrogenase</fullName>
        <shortName evidence="1">NAGSA dehydrogenase</shortName>
    </alternativeName>
</protein>